<proteinExistence type="evidence at protein level"/>
<keyword id="KW-0963">Cytoplasm</keyword>
<keyword id="KW-0221">Differentiation</keyword>
<keyword id="KW-0896">Oogenesis</keyword>
<keyword id="KW-1185">Reference proteome</keyword>
<keyword id="KW-0744">Spermatogenesis</keyword>
<gene>
    <name evidence="9" type="primary">tdrd6</name>
    <name evidence="5" type="synonym">tdrd6a</name>
</gene>
<name>TDRD6_DANRE</name>
<reference key="1">
    <citation type="journal article" date="2013" name="Nature">
        <title>The zebrafish reference genome sequence and its relationship to the human genome.</title>
        <authorList>
            <person name="Howe K."/>
            <person name="Clark M.D."/>
            <person name="Torroja C.F."/>
            <person name="Torrance J."/>
            <person name="Berthelot C."/>
            <person name="Muffato M."/>
            <person name="Collins J.E."/>
            <person name="Humphray S."/>
            <person name="McLaren K."/>
            <person name="Matthews L."/>
            <person name="McLaren S."/>
            <person name="Sealy I."/>
            <person name="Caccamo M."/>
            <person name="Churcher C."/>
            <person name="Scott C."/>
            <person name="Barrett J.C."/>
            <person name="Koch R."/>
            <person name="Rauch G.J."/>
            <person name="White S."/>
            <person name="Chow W."/>
            <person name="Kilian B."/>
            <person name="Quintais L.T."/>
            <person name="Guerra-Assuncao J.A."/>
            <person name="Zhou Y."/>
            <person name="Gu Y."/>
            <person name="Yen J."/>
            <person name="Vogel J.H."/>
            <person name="Eyre T."/>
            <person name="Redmond S."/>
            <person name="Banerjee R."/>
            <person name="Chi J."/>
            <person name="Fu B."/>
            <person name="Langley E."/>
            <person name="Maguire S.F."/>
            <person name="Laird G.K."/>
            <person name="Lloyd D."/>
            <person name="Kenyon E."/>
            <person name="Donaldson S."/>
            <person name="Sehra H."/>
            <person name="Almeida-King J."/>
            <person name="Loveland J."/>
            <person name="Trevanion S."/>
            <person name="Jones M."/>
            <person name="Quail M."/>
            <person name="Willey D."/>
            <person name="Hunt A."/>
            <person name="Burton J."/>
            <person name="Sims S."/>
            <person name="McLay K."/>
            <person name="Plumb B."/>
            <person name="Davis J."/>
            <person name="Clee C."/>
            <person name="Oliver K."/>
            <person name="Clark R."/>
            <person name="Riddle C."/>
            <person name="Elliot D."/>
            <person name="Threadgold G."/>
            <person name="Harden G."/>
            <person name="Ware D."/>
            <person name="Begum S."/>
            <person name="Mortimore B."/>
            <person name="Kerry G."/>
            <person name="Heath P."/>
            <person name="Phillimore B."/>
            <person name="Tracey A."/>
            <person name="Corby N."/>
            <person name="Dunn M."/>
            <person name="Johnson C."/>
            <person name="Wood J."/>
            <person name="Clark S."/>
            <person name="Pelan S."/>
            <person name="Griffiths G."/>
            <person name="Smith M."/>
            <person name="Glithero R."/>
            <person name="Howden P."/>
            <person name="Barker N."/>
            <person name="Lloyd C."/>
            <person name="Stevens C."/>
            <person name="Harley J."/>
            <person name="Holt K."/>
            <person name="Panagiotidis G."/>
            <person name="Lovell J."/>
            <person name="Beasley H."/>
            <person name="Henderson C."/>
            <person name="Gordon D."/>
            <person name="Auger K."/>
            <person name="Wright D."/>
            <person name="Collins J."/>
            <person name="Raisen C."/>
            <person name="Dyer L."/>
            <person name="Leung K."/>
            <person name="Robertson L."/>
            <person name="Ambridge K."/>
            <person name="Leongamornlert D."/>
            <person name="McGuire S."/>
            <person name="Gilderthorp R."/>
            <person name="Griffiths C."/>
            <person name="Manthravadi D."/>
            <person name="Nichol S."/>
            <person name="Barker G."/>
            <person name="Whitehead S."/>
            <person name="Kay M."/>
            <person name="Brown J."/>
            <person name="Murnane C."/>
            <person name="Gray E."/>
            <person name="Humphries M."/>
            <person name="Sycamore N."/>
            <person name="Barker D."/>
            <person name="Saunders D."/>
            <person name="Wallis J."/>
            <person name="Babbage A."/>
            <person name="Hammond S."/>
            <person name="Mashreghi-Mohammadi M."/>
            <person name="Barr L."/>
            <person name="Martin S."/>
            <person name="Wray P."/>
            <person name="Ellington A."/>
            <person name="Matthews N."/>
            <person name="Ellwood M."/>
            <person name="Woodmansey R."/>
            <person name="Clark G."/>
            <person name="Cooper J."/>
            <person name="Tromans A."/>
            <person name="Grafham D."/>
            <person name="Skuce C."/>
            <person name="Pandian R."/>
            <person name="Andrews R."/>
            <person name="Harrison E."/>
            <person name="Kimberley A."/>
            <person name="Garnett J."/>
            <person name="Fosker N."/>
            <person name="Hall R."/>
            <person name="Garner P."/>
            <person name="Kelly D."/>
            <person name="Bird C."/>
            <person name="Palmer S."/>
            <person name="Gehring I."/>
            <person name="Berger A."/>
            <person name="Dooley C.M."/>
            <person name="Ersan-Urun Z."/>
            <person name="Eser C."/>
            <person name="Geiger H."/>
            <person name="Geisler M."/>
            <person name="Karotki L."/>
            <person name="Kirn A."/>
            <person name="Konantz J."/>
            <person name="Konantz M."/>
            <person name="Oberlander M."/>
            <person name="Rudolph-Geiger S."/>
            <person name="Teucke M."/>
            <person name="Lanz C."/>
            <person name="Raddatz G."/>
            <person name="Osoegawa K."/>
            <person name="Zhu B."/>
            <person name="Rapp A."/>
            <person name="Widaa S."/>
            <person name="Langford C."/>
            <person name="Yang F."/>
            <person name="Schuster S.C."/>
            <person name="Carter N.P."/>
            <person name="Harrow J."/>
            <person name="Ning Z."/>
            <person name="Herrero J."/>
            <person name="Searle S.M."/>
            <person name="Enright A."/>
            <person name="Geisler R."/>
            <person name="Plasterk R.H."/>
            <person name="Lee C."/>
            <person name="Westerfield M."/>
            <person name="de Jong P.J."/>
            <person name="Zon L.I."/>
            <person name="Postlethwait J.H."/>
            <person name="Nusslein-Volhard C."/>
            <person name="Hubbard T.J."/>
            <person name="Roest Crollius H."/>
            <person name="Rogers J."/>
            <person name="Stemple D.L."/>
        </authorList>
    </citation>
    <scope>NUCLEOTIDE SEQUENCE [LARGE SCALE GENOMIC DNA]</scope>
    <source>
        <strain>Tuebingen</strain>
    </source>
</reference>
<reference key="2">
    <citation type="journal article" date="2018" name="Dev. Cell">
        <title>Tdrd6a Regulates the Aggregation of Buc into Functional Subcellular Compartments that Drive Germ Cell Specification.</title>
        <authorList>
            <person name="Roovers E.F."/>
            <person name="Kaaij L.J.T."/>
            <person name="Redl S."/>
            <person name="Bronkhorst A.W."/>
            <person name="Wiebrands K."/>
            <person name="de Jesus Domingues A.M."/>
            <person name="Huang H.Y."/>
            <person name="Han C.T."/>
            <person name="Riemer S."/>
            <person name="Dosch R."/>
            <person name="Salvenmoser W."/>
            <person name="Gruen D."/>
            <person name="Butter F."/>
            <person name="van Oudenaarden A."/>
            <person name="Ketting R.F."/>
        </authorList>
    </citation>
    <scope>FUNCTION</scope>
    <scope>SUBCELLULAR LOCATION</scope>
    <scope>INTERACTION WITH BUC</scope>
    <scope>DISRUPTION PHENOTYPE</scope>
    <scope>TISSUE SPECIFICITY</scope>
    <scope>DEVELOPMENTAL STAGE</scope>
    <scope>DOMAIN</scope>
</reference>
<evidence type="ECO:0000250" key="1">
    <source>
        <dbReference type="UniProtKB" id="P61407"/>
    </source>
</evidence>
<evidence type="ECO:0000255" key="2">
    <source>
        <dbReference type="PROSITE-ProRule" id="PRU00211"/>
    </source>
</evidence>
<evidence type="ECO:0000256" key="3">
    <source>
        <dbReference type="SAM" id="MobiDB-lite"/>
    </source>
</evidence>
<evidence type="ECO:0000269" key="4">
    <source>
    </source>
</evidence>
<evidence type="ECO:0000303" key="5">
    <source>
    </source>
</evidence>
<evidence type="ECO:0000305" key="6"/>
<evidence type="ECO:0000305" key="7">
    <source>
    </source>
</evidence>
<evidence type="ECO:0000312" key="8">
    <source>
        <dbReference type="Proteomes" id="UP000000437"/>
    </source>
</evidence>
<evidence type="ECO:0000312" key="9">
    <source>
        <dbReference type="ZFIN" id="ZDB-GENE-041001-210"/>
    </source>
</evidence>
<feature type="chain" id="PRO_0000448683" description="Tudor domain-containing 6">
    <location>
        <begin position="1"/>
        <end position="2117"/>
    </location>
</feature>
<feature type="domain" description="Tudor 1" evidence="2">
    <location>
        <begin position="62"/>
        <end position="118"/>
    </location>
</feature>
<feature type="domain" description="Tudor 2" evidence="2">
    <location>
        <begin position="291"/>
        <end position="350"/>
    </location>
</feature>
<feature type="domain" description="Tudor 3" evidence="2">
    <location>
        <begin position="527"/>
        <end position="584"/>
    </location>
</feature>
<feature type="domain" description="Tudor 4" evidence="2">
    <location>
        <begin position="757"/>
        <end position="816"/>
    </location>
</feature>
<feature type="domain" description="Tudor 5" evidence="2">
    <location>
        <begin position="974"/>
        <end position="1030"/>
    </location>
</feature>
<feature type="domain" description="Tudor 6" evidence="2">
    <location>
        <begin position="1282"/>
        <end position="1340"/>
    </location>
</feature>
<feature type="domain" description="Tudor 7" evidence="2">
    <location>
        <begin position="1485"/>
        <end position="1543"/>
    </location>
</feature>
<feature type="region of interest" description="Disordered" evidence="3">
    <location>
        <begin position="1125"/>
        <end position="1216"/>
    </location>
</feature>
<feature type="compositionally biased region" description="Basic and acidic residues" evidence="3">
    <location>
        <begin position="1127"/>
        <end position="1152"/>
    </location>
</feature>
<feature type="compositionally biased region" description="Polar residues" evidence="3">
    <location>
        <begin position="1153"/>
        <end position="1174"/>
    </location>
</feature>
<feature type="compositionally biased region" description="Polar residues" evidence="3">
    <location>
        <begin position="1181"/>
        <end position="1209"/>
    </location>
</feature>
<dbReference type="EMBL" id="BX510920">
    <property type="status" value="NOT_ANNOTATED_CDS"/>
    <property type="molecule type" value="Genomic_DNA"/>
</dbReference>
<dbReference type="RefSeq" id="XP_694024.6">
    <property type="nucleotide sequence ID" value="XM_688932.8"/>
</dbReference>
<dbReference type="SMR" id="F1R237"/>
<dbReference type="FunCoup" id="F1R237">
    <property type="interactions" value="1021"/>
</dbReference>
<dbReference type="STRING" id="7955.ENSDARP00000093281"/>
<dbReference type="PaxDb" id="7955-ENSDARP00000093281"/>
<dbReference type="Ensembl" id="ENSDART00000102504">
    <property type="protein sequence ID" value="ENSDARP00000093281"/>
    <property type="gene ID" value="ENSDARG00000070052"/>
</dbReference>
<dbReference type="Ensembl" id="ENSDART00000124497">
    <property type="protein sequence ID" value="ENSDARP00000112268"/>
    <property type="gene ID" value="ENSDARG00000070052"/>
</dbReference>
<dbReference type="AGR" id="ZFIN:ZDB-GENE-041001-210"/>
<dbReference type="ZFIN" id="ZDB-GENE-041001-210">
    <property type="gene designation" value="tdrd6a"/>
</dbReference>
<dbReference type="eggNOG" id="KOG2039">
    <property type="taxonomic scope" value="Eukaryota"/>
</dbReference>
<dbReference type="HOGENOM" id="CLU_001126_1_0_1"/>
<dbReference type="InParanoid" id="F1R237"/>
<dbReference type="OMA" id="PWLLTQM"/>
<dbReference type="OrthoDB" id="9989103at2759"/>
<dbReference type="CD-CODE" id="0E1CE0E6">
    <property type="entry name" value="Germ plasm"/>
</dbReference>
<dbReference type="CD-CODE" id="DD98A56E">
    <property type="entry name" value="Balbiani body"/>
</dbReference>
<dbReference type="PRO" id="PR:F1R237"/>
<dbReference type="Proteomes" id="UP000000437">
    <property type="component" value="Chromosome 20"/>
</dbReference>
<dbReference type="Bgee" id="ENSDARG00000070052">
    <property type="expression patterns" value="Expressed in testis and 21 other cell types or tissues"/>
</dbReference>
<dbReference type="ExpressionAtlas" id="F1R237">
    <property type="expression patterns" value="baseline"/>
</dbReference>
<dbReference type="GO" id="GO:0033391">
    <property type="term" value="C:chromatoid body"/>
    <property type="evidence" value="ECO:0000314"/>
    <property type="project" value="UniProtKB"/>
</dbReference>
<dbReference type="GO" id="GO:0060293">
    <property type="term" value="C:germ plasm"/>
    <property type="evidence" value="ECO:0000315"/>
    <property type="project" value="ZFIN"/>
</dbReference>
<dbReference type="GO" id="GO:0032019">
    <property type="term" value="C:mitochondrial cloud"/>
    <property type="evidence" value="ECO:0000315"/>
    <property type="project" value="ZFIN"/>
</dbReference>
<dbReference type="GO" id="GO:0043186">
    <property type="term" value="C:P granule"/>
    <property type="evidence" value="ECO:0000314"/>
    <property type="project" value="UniProtKB"/>
</dbReference>
<dbReference type="GO" id="GO:0007281">
    <property type="term" value="P:germ cell development"/>
    <property type="evidence" value="ECO:0000314"/>
    <property type="project" value="UniProtKB"/>
</dbReference>
<dbReference type="GO" id="GO:0070925">
    <property type="term" value="P:organelle assembly"/>
    <property type="evidence" value="ECO:0000315"/>
    <property type="project" value="ZFIN"/>
</dbReference>
<dbReference type="GO" id="GO:1903863">
    <property type="term" value="P:P granule assembly"/>
    <property type="evidence" value="ECO:0000314"/>
    <property type="project" value="UniProtKB"/>
</dbReference>
<dbReference type="GO" id="GO:0030719">
    <property type="term" value="P:P granule organization"/>
    <property type="evidence" value="ECO:0000318"/>
    <property type="project" value="GO_Central"/>
</dbReference>
<dbReference type="GO" id="GO:0034587">
    <property type="term" value="P:piRNA processing"/>
    <property type="evidence" value="ECO:0000318"/>
    <property type="project" value="GO_Central"/>
</dbReference>
<dbReference type="GO" id="GO:1905879">
    <property type="term" value="P:regulation of oogenesis"/>
    <property type="evidence" value="ECO:0000314"/>
    <property type="project" value="UniProtKB"/>
</dbReference>
<dbReference type="GO" id="GO:0007283">
    <property type="term" value="P:spermatogenesis"/>
    <property type="evidence" value="ECO:0000314"/>
    <property type="project" value="UniProtKB"/>
</dbReference>
<dbReference type="CDD" id="cd20421">
    <property type="entry name" value="Tudor_TDRD6_rpt2"/>
    <property type="match status" value="1"/>
</dbReference>
<dbReference type="FunFam" id="2.30.30.140:FF:000018">
    <property type="entry name" value="Serine/threonine-protein kinase 31"/>
    <property type="match status" value="2"/>
</dbReference>
<dbReference type="Gene3D" id="2.30.30.140">
    <property type="match status" value="6"/>
</dbReference>
<dbReference type="Gene3D" id="2.40.50.90">
    <property type="match status" value="7"/>
</dbReference>
<dbReference type="InterPro" id="IPR035437">
    <property type="entry name" value="SNase_OB-fold_sf"/>
</dbReference>
<dbReference type="InterPro" id="IPR002999">
    <property type="entry name" value="Tudor"/>
</dbReference>
<dbReference type="InterPro" id="IPR050621">
    <property type="entry name" value="Tudor_domain_containing"/>
</dbReference>
<dbReference type="InterPro" id="IPR047445">
    <property type="entry name" value="Tudor_TDRD6_rpt2"/>
</dbReference>
<dbReference type="PANTHER" id="PTHR22948:SF76">
    <property type="entry name" value="FI20010P1-RELATED"/>
    <property type="match status" value="1"/>
</dbReference>
<dbReference type="PANTHER" id="PTHR22948">
    <property type="entry name" value="TUDOR DOMAIN CONTAINING PROTEIN"/>
    <property type="match status" value="1"/>
</dbReference>
<dbReference type="Pfam" id="PF00567">
    <property type="entry name" value="TUDOR"/>
    <property type="match status" value="7"/>
</dbReference>
<dbReference type="SMART" id="SM00333">
    <property type="entry name" value="TUDOR"/>
    <property type="match status" value="7"/>
</dbReference>
<dbReference type="SUPFAM" id="SSF63748">
    <property type="entry name" value="Tudor/PWWP/MBT"/>
    <property type="match status" value="7"/>
</dbReference>
<dbReference type="PROSITE" id="PS50304">
    <property type="entry name" value="TUDOR"/>
    <property type="match status" value="6"/>
</dbReference>
<sequence length="2117" mass="236512">MCSIPGLPSKGSNVPVLITRVNLNPSCVLVEFWGNFDEDRKFAYQQLKKEIQYPRECFSESDGNPGDLCLVQVYETWYRARIVSRDSDEYSVFLIDEGRTLRAAVNTLAWGKSDFFYLPPEVEFCILANALPLSPENNWSSMALEFMKTFCGRRVNATVQDVLVAHRTFLLDIPCLSRQMFEMGFAKKLYSDQFMEFVVRSLQASTGTSDLKRISSIRTKPVEIIEQKEKQQAYMFPELQTDTVETVVITEVTSPFRIFCQLKVFSQELKKLTEQITQYYEGRVGSYFARAENLGSPCASRGSDGKWYRSVLQQVMSANNVVEVLHVDYGKKQFVQVENVKPLASEFFRMPVVTYVCSLHGIVDKGVGWTASQIDYLKSLLLNRTVIAKFQYQSLSEGVHYVTLYGEENTNINKLFELKPKCSLDSDMTLADFAVQKSPSSQKSKISRTTESTHINETYSDLKVNKPVFFTETLTPNSTHMAVVQHVDSPGKFWIQTQRYADEFDLLMNGLGNLYSDPTSTESLIRKPVVGLICAAKAQDGVFYRAAVYKVIDKTAEVYFLDYGNTEVVDSFNLRQLPLRFQQLPAVAVKCSLHGVKPRLKLWEERATLFFSKLVRDRIIDLHVQDKQQDTHIVQLVDPSLDGEKDVSKLLCNAGFAVSEKSIVDYSATRSCGLKTTHASGVFLTGTQPQTPCSSSVVMDSASAFKEYLFPIGSSLEVTVSYIENPNDFWCQKARNAACLEVLMQDIQRFYSHSEFEPLLEAACVARHPETGIWYRALVIQKHQTPHVDVLFIDYGQTKKVAIEDLRKITPAFLKMKGQAFRCSLYNLIHPVLHSSSDWSTEATLEFQEFVDAAASMNVPLKCTIFAVMYDSQKVVFNVVDLETPFQSICNLLVQRRLADRAPSKRSPLPPFRLDTYYYSTHGVKTGCDEKVSITCVKGVNQFFCHLARNSDEVEKLAEKVNFLCHQLEATKCPQTFGTVCFAKYTDGLWYRGQIKSTKPSVVINFVDYGDTLEVDKSDLLPVPIEAGDIMSVPVQAIECGLSDMPEELPCEVDNWFRKFADSHCFTALIVAKEPAGKLILELYDGKTQVNALIKQKFHNEIHKNDASTFKIYGLKSRAAESVEASACKKESSTGPKRDAIDQVPKSRESHAIQRSNDVASKQPQSRWGFSTNGRPEPTRDSGTINNCQKQPELRTSQGNLRHPCTSSKPEVVKPKPQALLKESALPIKSIKPGLEAEVFISHCNSPCSFFVQFATDEDDIYSLVEKLNADQSRCRNIDSSDIHEGDLVCAMFPDDSSWYRAVVRKNTNEKIDVEFVDFGNTAVISSKNVCHLGQSFASFPRYSIHCSVHKLNVDSKDQELAPNFKQVLEQNIEKVICTFVKMSGTMWEVRLDVNGVVLGSVCKDHVKPEIAIPDLKDAASEIKVCTYYKNPDISIGQVITGYTSYIKGPQLFWCQYVAMDKLQEISDMLQNIGNASETTLREDCMPVGSACIALFTEDNLWYRAKVTSKDLDTLSITFVDYGNESKVKIGDVKALPPKLSDVPPHAFDCQLEGFDVSEGFWDETADDAFYELVHDKPLNITIEKMGNSEMPHIVKLDCDGVDINTTMKSHWKTRNPETPPAELFNGAEMASDDDYVASKVNIDSVVTFDTDTDPADNETCTSALEMELSEQENLLSSTGVENEAQIDPLKMATENVTLPITESTVLSETHKKLETITEDEPVLGFTGLSDTNQHAVSKETDVGLPQHSEGASSVTIDSFLMNNTDSQLCIVEEPEAPSYEIIQSNLGCLRRATEKKPVGSECVIWSQVRRSWCTARVLKVSEEATLVLLEKYDSEVVVDPINIFEIMPEKPLQIACIEAAIANDDATKETDATLENSASKLYQTEVSDANGIAVALESEDLNGKEETFIDQMAPNDELAGQPQEEESVSCSAFLEDSKAKHMLVEGAQVHDLVQGLCPDDVESKDPQDDLNTSFEEQNDGAKMSTAVDLLLDFLDTAPRDKVQDVSETDALLEEFNIHVTEDLIVLTSDDGAESDTASDGTLHGDAVAMEVGPDTEESSCFQERSNASDCTSAEDSQVTHLTLKVEDASDDVIFVGVLQESQAVVHEPESEKEKRD</sequence>
<accession>F1R237</accession>
<accession>F1RE34</accession>
<organism evidence="8">
    <name type="scientific">Danio rerio</name>
    <name type="common">Zebrafish</name>
    <name type="synonym">Brachydanio rerio</name>
    <dbReference type="NCBI Taxonomy" id="7955"/>
    <lineage>
        <taxon>Eukaryota</taxon>
        <taxon>Metazoa</taxon>
        <taxon>Chordata</taxon>
        <taxon>Craniata</taxon>
        <taxon>Vertebrata</taxon>
        <taxon>Euteleostomi</taxon>
        <taxon>Actinopterygii</taxon>
        <taxon>Neopterygii</taxon>
        <taxon>Teleostei</taxon>
        <taxon>Ostariophysi</taxon>
        <taxon>Cypriniformes</taxon>
        <taxon>Danionidae</taxon>
        <taxon>Danioninae</taxon>
        <taxon>Danio</taxon>
    </lineage>
</organism>
<protein>
    <recommendedName>
        <fullName evidence="6">Tudor domain-containing 6</fullName>
    </recommendedName>
</protein>
<comment type="function">
    <text evidence="1 4">Tudor domain-containing protein involved in germ cell development, more specifically the formation of chromatoid body (during spermiogenesis), Balbiani body (during oogenesis), germ plasm (upon fertilization), and for proper miRNA expression and spliceosome maturation (By similarity) (PubMed:30086300). Required for Balbiani body and germ plasm formation and mobility through interaction with dimethylated arginines in the prion-like protein Bucky ball (buc) (PubMed:30086300). Coordinates transcript deposition into future primordial germ cells (PubMed:30086300). Interacts with known germ plasm mRNAs such as vasa, dazl, nanos3 and hook2 (PubMed:30086300).</text>
</comment>
<comment type="subunit">
    <text evidence="4">Interacts (via Tudor domain) with buc (when dimethylated on arginine residues); and may be responsible for recruitment of different protein complexes to germ plasm.</text>
</comment>
<comment type="subcellular location">
    <subcellularLocation>
        <location evidence="4">Cytoplasm</location>
    </subcellularLocation>
    <text evidence="1 4">Presents in chromatoid body (CB) of spermatids, also named processing bodies (P-bodies) in somatic cells. Detected in the multilobular cytoplasmic CBs (also called intermitochondrial cementin) in pachytene spermatocytes and as a single perinuclear CB in haploid round spermatids (By similarity). Localizes to nuage, the Balbiani body during oogenesis, and in the grem plasm upon fertilization (PubMed:30086300).</text>
</comment>
<comment type="developmental stage">
    <text evidence="4">Expressed in the ovary, where it localizes to nuage and to the Balbiani body (PubMed:30086300). Maternally provided and localized to the germ plasm in 4-cell stage embryos (PubMed:30086300). 24 hours post-fertilization, restricted to primordial germ cells, where it localizes to nuage (a peri-nuclear protein-RNA aggregate that associates closely with mitochondria) (PubMed:30086300).</text>
</comment>
<comment type="domain">
    <text evidence="7">The tudor domains recognize and bind to proteins with dimethylated arginine or lysine residues (Probable). Plays an important role in the protein functions through its direct binding to the target proteins (Probable).</text>
</comment>
<comment type="disruption phenotype">
    <text evidence="4">Knockout oocytes exhibit significant defects in germ cell development, leading to reduction in primordial germ cell number in the offspring, irrespective of the genotype of the father (PubMed:30086300). Barely affects piRNA populations (PubMed:30086300).</text>
</comment>